<reference key="1">
    <citation type="journal article" date="2004" name="Nat. Biotechnol.">
        <title>The genome sequence of the anaerobic, sulfate-reducing bacterium Desulfovibrio vulgaris Hildenborough.</title>
        <authorList>
            <person name="Heidelberg J.F."/>
            <person name="Seshadri R."/>
            <person name="Haveman S.A."/>
            <person name="Hemme C.L."/>
            <person name="Paulsen I.T."/>
            <person name="Kolonay J.F."/>
            <person name="Eisen J.A."/>
            <person name="Ward N.L."/>
            <person name="Methe B.A."/>
            <person name="Brinkac L.M."/>
            <person name="Daugherty S.C."/>
            <person name="DeBoy R.T."/>
            <person name="Dodson R.J."/>
            <person name="Durkin A.S."/>
            <person name="Madupu R."/>
            <person name="Nelson W.C."/>
            <person name="Sullivan S.A."/>
            <person name="Fouts D.E."/>
            <person name="Haft D.H."/>
            <person name="Selengut J."/>
            <person name="Peterson J.D."/>
            <person name="Davidsen T.M."/>
            <person name="Zafar N."/>
            <person name="Zhou L."/>
            <person name="Radune D."/>
            <person name="Dimitrov G."/>
            <person name="Hance M."/>
            <person name="Tran K."/>
            <person name="Khouri H.M."/>
            <person name="Gill J."/>
            <person name="Utterback T.R."/>
            <person name="Feldblyum T.V."/>
            <person name="Wall J.D."/>
            <person name="Voordouw G."/>
            <person name="Fraser C.M."/>
        </authorList>
    </citation>
    <scope>NUCLEOTIDE SEQUENCE [LARGE SCALE GENOMIC DNA]</scope>
    <source>
        <strain>ATCC 29579 / DSM 644 / CCUG 34227 / NCIMB 8303 / VKM B-1760 / Hildenborough</strain>
    </source>
</reference>
<feature type="chain" id="PRO_0000174517" description="S-adenosylmethionine synthase">
    <location>
        <begin position="1"/>
        <end position="391"/>
    </location>
</feature>
<feature type="region of interest" description="Flexible loop" evidence="1">
    <location>
        <begin position="103"/>
        <end position="113"/>
    </location>
</feature>
<feature type="binding site" description="in other chain" evidence="1">
    <location>
        <position position="19"/>
    </location>
    <ligand>
        <name>ATP</name>
        <dbReference type="ChEBI" id="CHEBI:30616"/>
        <note>ligand shared between two neighboring subunits</note>
    </ligand>
</feature>
<feature type="binding site" evidence="1">
    <location>
        <position position="21"/>
    </location>
    <ligand>
        <name>Mg(2+)</name>
        <dbReference type="ChEBI" id="CHEBI:18420"/>
    </ligand>
</feature>
<feature type="binding site" evidence="1">
    <location>
        <position position="47"/>
    </location>
    <ligand>
        <name>K(+)</name>
        <dbReference type="ChEBI" id="CHEBI:29103"/>
    </ligand>
</feature>
<feature type="binding site" description="in other chain" evidence="1">
    <location>
        <position position="60"/>
    </location>
    <ligand>
        <name>L-methionine</name>
        <dbReference type="ChEBI" id="CHEBI:57844"/>
        <note>ligand shared between two neighboring subunits</note>
    </ligand>
</feature>
<feature type="binding site" description="in other chain" evidence="1">
    <location>
        <position position="103"/>
    </location>
    <ligand>
        <name>L-methionine</name>
        <dbReference type="ChEBI" id="CHEBI:57844"/>
        <note>ligand shared between two neighboring subunits</note>
    </ligand>
</feature>
<feature type="binding site" description="in other chain" evidence="1">
    <location>
        <begin position="168"/>
        <end position="170"/>
    </location>
    <ligand>
        <name>ATP</name>
        <dbReference type="ChEBI" id="CHEBI:30616"/>
        <note>ligand shared between two neighboring subunits</note>
    </ligand>
</feature>
<feature type="binding site" description="in other chain" evidence="1">
    <location>
        <begin position="236"/>
        <end position="237"/>
    </location>
    <ligand>
        <name>ATP</name>
        <dbReference type="ChEBI" id="CHEBI:30616"/>
        <note>ligand shared between two neighboring subunits</note>
    </ligand>
</feature>
<feature type="binding site" evidence="1">
    <location>
        <position position="245"/>
    </location>
    <ligand>
        <name>ATP</name>
        <dbReference type="ChEBI" id="CHEBI:30616"/>
        <note>ligand shared between two neighboring subunits</note>
    </ligand>
</feature>
<feature type="binding site" evidence="1">
    <location>
        <position position="245"/>
    </location>
    <ligand>
        <name>L-methionine</name>
        <dbReference type="ChEBI" id="CHEBI:57844"/>
        <note>ligand shared between two neighboring subunits</note>
    </ligand>
</feature>
<feature type="binding site" description="in other chain" evidence="1">
    <location>
        <begin position="251"/>
        <end position="252"/>
    </location>
    <ligand>
        <name>ATP</name>
        <dbReference type="ChEBI" id="CHEBI:30616"/>
        <note>ligand shared between two neighboring subunits</note>
    </ligand>
</feature>
<feature type="binding site" evidence="1">
    <location>
        <position position="268"/>
    </location>
    <ligand>
        <name>ATP</name>
        <dbReference type="ChEBI" id="CHEBI:30616"/>
        <note>ligand shared between two neighboring subunits</note>
    </ligand>
</feature>
<feature type="binding site" evidence="1">
    <location>
        <position position="272"/>
    </location>
    <ligand>
        <name>ATP</name>
        <dbReference type="ChEBI" id="CHEBI:30616"/>
        <note>ligand shared between two neighboring subunits</note>
    </ligand>
</feature>
<feature type="binding site" description="in other chain" evidence="1">
    <location>
        <position position="276"/>
    </location>
    <ligand>
        <name>L-methionine</name>
        <dbReference type="ChEBI" id="CHEBI:57844"/>
        <note>ligand shared between two neighboring subunits</note>
    </ligand>
</feature>
<evidence type="ECO:0000255" key="1">
    <source>
        <dbReference type="HAMAP-Rule" id="MF_00086"/>
    </source>
</evidence>
<comment type="function">
    <text evidence="1">Catalyzes the formation of S-adenosylmethionine (AdoMet) from methionine and ATP. The overall synthetic reaction is composed of two sequential steps, AdoMet formation and the subsequent tripolyphosphate hydrolysis which occurs prior to release of AdoMet from the enzyme.</text>
</comment>
<comment type="catalytic activity">
    <reaction evidence="1">
        <text>L-methionine + ATP + H2O = S-adenosyl-L-methionine + phosphate + diphosphate</text>
        <dbReference type="Rhea" id="RHEA:21080"/>
        <dbReference type="ChEBI" id="CHEBI:15377"/>
        <dbReference type="ChEBI" id="CHEBI:30616"/>
        <dbReference type="ChEBI" id="CHEBI:33019"/>
        <dbReference type="ChEBI" id="CHEBI:43474"/>
        <dbReference type="ChEBI" id="CHEBI:57844"/>
        <dbReference type="ChEBI" id="CHEBI:59789"/>
        <dbReference type="EC" id="2.5.1.6"/>
    </reaction>
</comment>
<comment type="cofactor">
    <cofactor evidence="1">
        <name>Mg(2+)</name>
        <dbReference type="ChEBI" id="CHEBI:18420"/>
    </cofactor>
    <text evidence="1">Binds 2 divalent ions per subunit.</text>
</comment>
<comment type="cofactor">
    <cofactor evidence="1">
        <name>K(+)</name>
        <dbReference type="ChEBI" id="CHEBI:29103"/>
    </cofactor>
    <text evidence="1">Binds 1 potassium ion per subunit.</text>
</comment>
<comment type="pathway">
    <text evidence="1">Amino-acid biosynthesis; S-adenosyl-L-methionine biosynthesis; S-adenosyl-L-methionine from L-methionine: step 1/1.</text>
</comment>
<comment type="subunit">
    <text evidence="1">Homotetramer; dimer of dimers.</text>
</comment>
<comment type="interaction">
    <interactant intactId="EBI-10071362">
        <id>Q729A3</id>
    </interactant>
    <interactant intactId="EBI-10071066">
        <id>Q72ES6</id>
        <label>DVU_0493</label>
    </interactant>
    <organismsDiffer>false</organismsDiffer>
    <experiments>2</experiments>
</comment>
<comment type="subcellular location">
    <subcellularLocation>
        <location evidence="1">Cytoplasm</location>
    </subcellularLocation>
</comment>
<comment type="similarity">
    <text evidence="1">Belongs to the AdoMet synthase family.</text>
</comment>
<gene>
    <name evidence="1" type="primary">metK</name>
    <name type="ordered locus">DVU_2449</name>
</gene>
<protein>
    <recommendedName>
        <fullName evidence="1">S-adenosylmethionine synthase</fullName>
        <shortName evidence="1">AdoMet synthase</shortName>
        <ecNumber evidence="1">2.5.1.6</ecNumber>
    </recommendedName>
    <alternativeName>
        <fullName evidence="1">MAT</fullName>
    </alternativeName>
    <alternativeName>
        <fullName evidence="1">Methionine adenosyltransferase</fullName>
    </alternativeName>
</protein>
<keyword id="KW-0067">ATP-binding</keyword>
<keyword id="KW-0963">Cytoplasm</keyword>
<keyword id="KW-0460">Magnesium</keyword>
<keyword id="KW-0479">Metal-binding</keyword>
<keyword id="KW-0547">Nucleotide-binding</keyword>
<keyword id="KW-0554">One-carbon metabolism</keyword>
<keyword id="KW-0630">Potassium</keyword>
<keyword id="KW-1185">Reference proteome</keyword>
<keyword id="KW-0808">Transferase</keyword>
<proteinExistence type="evidence at protein level"/>
<accession>Q729A3</accession>
<name>METK_NITV2</name>
<dbReference type="EC" id="2.5.1.6" evidence="1"/>
<dbReference type="EMBL" id="AE017285">
    <property type="protein sequence ID" value="AAS96921.1"/>
    <property type="molecule type" value="Genomic_DNA"/>
</dbReference>
<dbReference type="RefSeq" id="WP_010939720.1">
    <property type="nucleotide sequence ID" value="NC_002937.3"/>
</dbReference>
<dbReference type="RefSeq" id="YP_011661.1">
    <property type="nucleotide sequence ID" value="NC_002937.3"/>
</dbReference>
<dbReference type="SMR" id="Q729A3"/>
<dbReference type="IntAct" id="Q729A3">
    <property type="interactions" value="1"/>
</dbReference>
<dbReference type="STRING" id="882.DVU_2449"/>
<dbReference type="PaxDb" id="882-DVU_2449"/>
<dbReference type="EnsemblBacteria" id="AAS96921">
    <property type="protein sequence ID" value="AAS96921"/>
    <property type="gene ID" value="DVU_2449"/>
</dbReference>
<dbReference type="KEGG" id="dvu:DVU_2449"/>
<dbReference type="PATRIC" id="fig|882.5.peg.2218"/>
<dbReference type="eggNOG" id="COG0192">
    <property type="taxonomic scope" value="Bacteria"/>
</dbReference>
<dbReference type="HOGENOM" id="CLU_041802_1_1_7"/>
<dbReference type="OrthoDB" id="9801686at2"/>
<dbReference type="PhylomeDB" id="Q729A3"/>
<dbReference type="UniPathway" id="UPA00315">
    <property type="reaction ID" value="UER00080"/>
</dbReference>
<dbReference type="Proteomes" id="UP000002194">
    <property type="component" value="Chromosome"/>
</dbReference>
<dbReference type="GO" id="GO:0005737">
    <property type="term" value="C:cytoplasm"/>
    <property type="evidence" value="ECO:0007669"/>
    <property type="project" value="UniProtKB-SubCell"/>
</dbReference>
<dbReference type="GO" id="GO:0005524">
    <property type="term" value="F:ATP binding"/>
    <property type="evidence" value="ECO:0007669"/>
    <property type="project" value="UniProtKB-UniRule"/>
</dbReference>
<dbReference type="GO" id="GO:0000287">
    <property type="term" value="F:magnesium ion binding"/>
    <property type="evidence" value="ECO:0007669"/>
    <property type="project" value="UniProtKB-UniRule"/>
</dbReference>
<dbReference type="GO" id="GO:0004478">
    <property type="term" value="F:methionine adenosyltransferase activity"/>
    <property type="evidence" value="ECO:0007669"/>
    <property type="project" value="UniProtKB-UniRule"/>
</dbReference>
<dbReference type="GO" id="GO:0006730">
    <property type="term" value="P:one-carbon metabolic process"/>
    <property type="evidence" value="ECO:0007669"/>
    <property type="project" value="UniProtKB-KW"/>
</dbReference>
<dbReference type="GO" id="GO:0006556">
    <property type="term" value="P:S-adenosylmethionine biosynthetic process"/>
    <property type="evidence" value="ECO:0007669"/>
    <property type="project" value="UniProtKB-UniRule"/>
</dbReference>
<dbReference type="CDD" id="cd18079">
    <property type="entry name" value="S-AdoMet_synt"/>
    <property type="match status" value="1"/>
</dbReference>
<dbReference type="FunFam" id="3.30.300.10:FF:000003">
    <property type="entry name" value="S-adenosylmethionine synthase"/>
    <property type="match status" value="1"/>
</dbReference>
<dbReference type="Gene3D" id="3.30.300.10">
    <property type="match status" value="3"/>
</dbReference>
<dbReference type="HAMAP" id="MF_00086">
    <property type="entry name" value="S_AdoMet_synth1"/>
    <property type="match status" value="1"/>
</dbReference>
<dbReference type="InterPro" id="IPR022631">
    <property type="entry name" value="ADOMET_SYNTHASE_CS"/>
</dbReference>
<dbReference type="InterPro" id="IPR022630">
    <property type="entry name" value="S-AdoMet_synt_C"/>
</dbReference>
<dbReference type="InterPro" id="IPR022629">
    <property type="entry name" value="S-AdoMet_synt_central"/>
</dbReference>
<dbReference type="InterPro" id="IPR022628">
    <property type="entry name" value="S-AdoMet_synt_N"/>
</dbReference>
<dbReference type="InterPro" id="IPR002133">
    <property type="entry name" value="S-AdoMet_synthetase"/>
</dbReference>
<dbReference type="InterPro" id="IPR022636">
    <property type="entry name" value="S-AdoMet_synthetase_sfam"/>
</dbReference>
<dbReference type="NCBIfam" id="TIGR01034">
    <property type="entry name" value="metK"/>
    <property type="match status" value="1"/>
</dbReference>
<dbReference type="PANTHER" id="PTHR11964">
    <property type="entry name" value="S-ADENOSYLMETHIONINE SYNTHETASE"/>
    <property type="match status" value="1"/>
</dbReference>
<dbReference type="Pfam" id="PF02773">
    <property type="entry name" value="S-AdoMet_synt_C"/>
    <property type="match status" value="1"/>
</dbReference>
<dbReference type="Pfam" id="PF02772">
    <property type="entry name" value="S-AdoMet_synt_M"/>
    <property type="match status" value="1"/>
</dbReference>
<dbReference type="Pfam" id="PF00438">
    <property type="entry name" value="S-AdoMet_synt_N"/>
    <property type="match status" value="1"/>
</dbReference>
<dbReference type="PIRSF" id="PIRSF000497">
    <property type="entry name" value="MAT"/>
    <property type="match status" value="1"/>
</dbReference>
<dbReference type="SUPFAM" id="SSF55973">
    <property type="entry name" value="S-adenosylmethionine synthetase"/>
    <property type="match status" value="3"/>
</dbReference>
<dbReference type="PROSITE" id="PS00376">
    <property type="entry name" value="ADOMET_SYNTHASE_1"/>
    <property type="match status" value="1"/>
</dbReference>
<dbReference type="PROSITE" id="PS00377">
    <property type="entry name" value="ADOMET_SYNTHASE_2"/>
    <property type="match status" value="1"/>
</dbReference>
<organism>
    <name type="scientific">Nitratidesulfovibrio vulgaris (strain ATCC 29579 / DSM 644 / CCUG 34227 / NCIMB 8303 / VKM B-1760 / Hildenborough)</name>
    <name type="common">Desulfovibrio vulgaris</name>
    <dbReference type="NCBI Taxonomy" id="882"/>
    <lineage>
        <taxon>Bacteria</taxon>
        <taxon>Pseudomonadati</taxon>
        <taxon>Thermodesulfobacteriota</taxon>
        <taxon>Desulfovibrionia</taxon>
        <taxon>Desulfovibrionales</taxon>
        <taxon>Desulfovibrionaceae</taxon>
        <taxon>Nitratidesulfovibrio</taxon>
    </lineage>
</organism>
<sequence>MIPSKGKYYFTSESVTEGHPDKVADQISDAVLDVLLAQDPNSRVACETLVTTGMAVIAGEITTRGYADLPHVVRETIRNIGYNSSEMGFDWQTCAVISSIDKQSADIAQGVDRATNEDQGAGDQGMMFGFACDETATLMPAPIYWAHQLSQRLTEVRKDGTVDIFRPDGKTQVSFEYVDGKPVRINNVVVSTQHKDSASQADIIDAVKTHVIRPILEPSGFFDEKACDIFINTTGRFVIGGPMGDCGLTGRKIIQDTYGGMGHHGGGAFSGKDASKVDRSGAYMARYIAKNVVASGLAPKCEVQIAYCIGVAEPVSVLVSSQGTASVPDEVLTRAVREVFDLRPFHITRRLDLLRPIYGKTSCYGHFGRELPEFTWEHTDAAADLRTAAKV</sequence>